<reference key="1">
    <citation type="journal article" date="1992" name="Proc. Natl. Acad. Sci. U.S.A.">
        <title>Distinct sequence of gonadotropin-releasing hormone (GnRH) in dogfish brain provides insight into GnRH evolution.</title>
        <authorList>
            <person name="Lovejoy D.A."/>
            <person name="Fischer W.H."/>
            <person name="Ngamvongchon S."/>
            <person name="Craig A.G."/>
            <person name="Nahorniak C.S."/>
            <person name="Peter R.E."/>
            <person name="Rivier J.E."/>
            <person name="Sherwood N.M."/>
        </authorList>
    </citation>
    <scope>PROTEIN SEQUENCE</scope>
    <scope>PYROGLUTAMATE FORMATION AT GLN-1</scope>
    <scope>AMIDATION AT GLY-10</scope>
    <source>
        <tissue>Brain</tissue>
    </source>
</reference>
<name>GONL_SQUAC</name>
<sequence>QHWSHGWLPG</sequence>
<proteinExistence type="evidence at protein level"/>
<feature type="peptide" id="PRO_0000043958" description="Gonadoliberin">
    <location>
        <begin position="1"/>
        <end position="10"/>
    </location>
</feature>
<feature type="modified residue" description="Pyrrolidone carboxylic acid" evidence="1">
    <location>
        <position position="1"/>
    </location>
</feature>
<feature type="modified residue" description="Glycine amide" evidence="1">
    <location>
        <position position="10"/>
    </location>
</feature>
<keyword id="KW-0027">Amidation</keyword>
<keyword id="KW-0903">Direct protein sequencing</keyword>
<keyword id="KW-0372">Hormone</keyword>
<keyword id="KW-0873">Pyrrolidone carboxylic acid</keyword>
<keyword id="KW-0964">Secreted</keyword>
<accession>P27429</accession>
<dbReference type="PIR" id="A46030">
    <property type="entry name" value="A46030"/>
</dbReference>
<dbReference type="GO" id="GO:0005576">
    <property type="term" value="C:extracellular region"/>
    <property type="evidence" value="ECO:0007669"/>
    <property type="project" value="UniProtKB-SubCell"/>
</dbReference>
<dbReference type="GO" id="GO:0005179">
    <property type="term" value="F:hormone activity"/>
    <property type="evidence" value="ECO:0007669"/>
    <property type="project" value="UniProtKB-KW"/>
</dbReference>
<dbReference type="InterPro" id="IPR002012">
    <property type="entry name" value="GnRH"/>
</dbReference>
<dbReference type="Pfam" id="PF00446">
    <property type="entry name" value="GnRH"/>
    <property type="match status" value="1"/>
</dbReference>
<dbReference type="PROSITE" id="PS00473">
    <property type="entry name" value="GNRH"/>
    <property type="match status" value="1"/>
</dbReference>
<comment type="function">
    <text>Stimulates the secretion of gonadotropins.</text>
</comment>
<comment type="subcellular location">
    <subcellularLocation>
        <location>Secreted</location>
    </subcellularLocation>
</comment>
<comment type="similarity">
    <text evidence="2">Belongs to the GnRH family.</text>
</comment>
<organism>
    <name type="scientific">Squalus acanthias</name>
    <name type="common">Spiny dogfish</name>
    <dbReference type="NCBI Taxonomy" id="7797"/>
    <lineage>
        <taxon>Eukaryota</taxon>
        <taxon>Metazoa</taxon>
        <taxon>Chordata</taxon>
        <taxon>Craniata</taxon>
        <taxon>Vertebrata</taxon>
        <taxon>Chondrichthyes</taxon>
        <taxon>Elasmobranchii</taxon>
        <taxon>Squalomorphii</taxon>
        <taxon>Squaliformes</taxon>
        <taxon>Squalidae</taxon>
        <taxon>Squalus</taxon>
    </lineage>
</organism>
<evidence type="ECO:0000269" key="1">
    <source>
    </source>
</evidence>
<evidence type="ECO:0000305" key="2"/>
<protein>
    <recommendedName>
        <fullName>Gonadoliberin</fullName>
    </recommendedName>
    <alternativeName>
        <fullName>Gonadotropin-releasing hormone</fullName>
        <shortName>GnRH</shortName>
    </alternativeName>
    <alternativeName>
        <fullName>LH-RH</fullName>
    </alternativeName>
    <alternativeName>
        <fullName>Luliberin</fullName>
    </alternativeName>
</protein>